<accession>Q8BTG3</accession>
<proteinExistence type="evidence at protein level"/>
<protein>
    <recommendedName>
        <fullName>T-complex protein 11-like protein 1</fullName>
    </recommendedName>
</protein>
<organism>
    <name type="scientific">Mus musculus</name>
    <name type="common">Mouse</name>
    <dbReference type="NCBI Taxonomy" id="10090"/>
    <lineage>
        <taxon>Eukaryota</taxon>
        <taxon>Metazoa</taxon>
        <taxon>Chordata</taxon>
        <taxon>Craniata</taxon>
        <taxon>Vertebrata</taxon>
        <taxon>Euteleostomi</taxon>
        <taxon>Mammalia</taxon>
        <taxon>Eutheria</taxon>
        <taxon>Euarchontoglires</taxon>
        <taxon>Glires</taxon>
        <taxon>Rodentia</taxon>
        <taxon>Myomorpha</taxon>
        <taxon>Muroidea</taxon>
        <taxon>Muridae</taxon>
        <taxon>Murinae</taxon>
        <taxon>Mus</taxon>
        <taxon>Mus</taxon>
    </lineage>
</organism>
<keyword id="KW-0597">Phosphoprotein</keyword>
<keyword id="KW-1185">Reference proteome</keyword>
<evidence type="ECO:0000250" key="1">
    <source>
        <dbReference type="UniProtKB" id="Q9NUJ3"/>
    </source>
</evidence>
<evidence type="ECO:0000256" key="2">
    <source>
        <dbReference type="SAM" id="MobiDB-lite"/>
    </source>
</evidence>
<evidence type="ECO:0000305" key="3"/>
<gene>
    <name type="primary">Tcp11l1</name>
</gene>
<name>T11L1_MOUSE</name>
<comment type="similarity">
    <text evidence="3">Belongs to the TCP11 family.</text>
</comment>
<reference key="1">
    <citation type="journal article" date="2005" name="Science">
        <title>The transcriptional landscape of the mammalian genome.</title>
        <authorList>
            <person name="Carninci P."/>
            <person name="Kasukawa T."/>
            <person name="Katayama S."/>
            <person name="Gough J."/>
            <person name="Frith M.C."/>
            <person name="Maeda N."/>
            <person name="Oyama R."/>
            <person name="Ravasi T."/>
            <person name="Lenhard B."/>
            <person name="Wells C."/>
            <person name="Kodzius R."/>
            <person name="Shimokawa K."/>
            <person name="Bajic V.B."/>
            <person name="Brenner S.E."/>
            <person name="Batalov S."/>
            <person name="Forrest A.R."/>
            <person name="Zavolan M."/>
            <person name="Davis M.J."/>
            <person name="Wilming L.G."/>
            <person name="Aidinis V."/>
            <person name="Allen J.E."/>
            <person name="Ambesi-Impiombato A."/>
            <person name="Apweiler R."/>
            <person name="Aturaliya R.N."/>
            <person name="Bailey T.L."/>
            <person name="Bansal M."/>
            <person name="Baxter L."/>
            <person name="Beisel K.W."/>
            <person name="Bersano T."/>
            <person name="Bono H."/>
            <person name="Chalk A.M."/>
            <person name="Chiu K.P."/>
            <person name="Choudhary V."/>
            <person name="Christoffels A."/>
            <person name="Clutterbuck D.R."/>
            <person name="Crowe M.L."/>
            <person name="Dalla E."/>
            <person name="Dalrymple B.P."/>
            <person name="de Bono B."/>
            <person name="Della Gatta G."/>
            <person name="di Bernardo D."/>
            <person name="Down T."/>
            <person name="Engstrom P."/>
            <person name="Fagiolini M."/>
            <person name="Faulkner G."/>
            <person name="Fletcher C.F."/>
            <person name="Fukushima T."/>
            <person name="Furuno M."/>
            <person name="Futaki S."/>
            <person name="Gariboldi M."/>
            <person name="Georgii-Hemming P."/>
            <person name="Gingeras T.R."/>
            <person name="Gojobori T."/>
            <person name="Green R.E."/>
            <person name="Gustincich S."/>
            <person name="Harbers M."/>
            <person name="Hayashi Y."/>
            <person name="Hensch T.K."/>
            <person name="Hirokawa N."/>
            <person name="Hill D."/>
            <person name="Huminiecki L."/>
            <person name="Iacono M."/>
            <person name="Ikeo K."/>
            <person name="Iwama A."/>
            <person name="Ishikawa T."/>
            <person name="Jakt M."/>
            <person name="Kanapin A."/>
            <person name="Katoh M."/>
            <person name="Kawasawa Y."/>
            <person name="Kelso J."/>
            <person name="Kitamura H."/>
            <person name="Kitano H."/>
            <person name="Kollias G."/>
            <person name="Krishnan S.P."/>
            <person name="Kruger A."/>
            <person name="Kummerfeld S.K."/>
            <person name="Kurochkin I.V."/>
            <person name="Lareau L.F."/>
            <person name="Lazarevic D."/>
            <person name="Lipovich L."/>
            <person name="Liu J."/>
            <person name="Liuni S."/>
            <person name="McWilliam S."/>
            <person name="Madan Babu M."/>
            <person name="Madera M."/>
            <person name="Marchionni L."/>
            <person name="Matsuda H."/>
            <person name="Matsuzawa S."/>
            <person name="Miki H."/>
            <person name="Mignone F."/>
            <person name="Miyake S."/>
            <person name="Morris K."/>
            <person name="Mottagui-Tabar S."/>
            <person name="Mulder N."/>
            <person name="Nakano N."/>
            <person name="Nakauchi H."/>
            <person name="Ng P."/>
            <person name="Nilsson R."/>
            <person name="Nishiguchi S."/>
            <person name="Nishikawa S."/>
            <person name="Nori F."/>
            <person name="Ohara O."/>
            <person name="Okazaki Y."/>
            <person name="Orlando V."/>
            <person name="Pang K.C."/>
            <person name="Pavan W.J."/>
            <person name="Pavesi G."/>
            <person name="Pesole G."/>
            <person name="Petrovsky N."/>
            <person name="Piazza S."/>
            <person name="Reed J."/>
            <person name="Reid J.F."/>
            <person name="Ring B.Z."/>
            <person name="Ringwald M."/>
            <person name="Rost B."/>
            <person name="Ruan Y."/>
            <person name="Salzberg S.L."/>
            <person name="Sandelin A."/>
            <person name="Schneider C."/>
            <person name="Schoenbach C."/>
            <person name="Sekiguchi K."/>
            <person name="Semple C.A."/>
            <person name="Seno S."/>
            <person name="Sessa L."/>
            <person name="Sheng Y."/>
            <person name="Shibata Y."/>
            <person name="Shimada H."/>
            <person name="Shimada K."/>
            <person name="Silva D."/>
            <person name="Sinclair B."/>
            <person name="Sperling S."/>
            <person name="Stupka E."/>
            <person name="Sugiura K."/>
            <person name="Sultana R."/>
            <person name="Takenaka Y."/>
            <person name="Taki K."/>
            <person name="Tammoja K."/>
            <person name="Tan S.L."/>
            <person name="Tang S."/>
            <person name="Taylor M.S."/>
            <person name="Tegner J."/>
            <person name="Teichmann S.A."/>
            <person name="Ueda H.R."/>
            <person name="van Nimwegen E."/>
            <person name="Verardo R."/>
            <person name="Wei C.L."/>
            <person name="Yagi K."/>
            <person name="Yamanishi H."/>
            <person name="Zabarovsky E."/>
            <person name="Zhu S."/>
            <person name="Zimmer A."/>
            <person name="Hide W."/>
            <person name="Bult C."/>
            <person name="Grimmond S.M."/>
            <person name="Teasdale R.D."/>
            <person name="Liu E.T."/>
            <person name="Brusic V."/>
            <person name="Quackenbush J."/>
            <person name="Wahlestedt C."/>
            <person name="Mattick J.S."/>
            <person name="Hume D.A."/>
            <person name="Kai C."/>
            <person name="Sasaki D."/>
            <person name="Tomaru Y."/>
            <person name="Fukuda S."/>
            <person name="Kanamori-Katayama M."/>
            <person name="Suzuki M."/>
            <person name="Aoki J."/>
            <person name="Arakawa T."/>
            <person name="Iida J."/>
            <person name="Imamura K."/>
            <person name="Itoh M."/>
            <person name="Kato T."/>
            <person name="Kawaji H."/>
            <person name="Kawagashira N."/>
            <person name="Kawashima T."/>
            <person name="Kojima M."/>
            <person name="Kondo S."/>
            <person name="Konno H."/>
            <person name="Nakano K."/>
            <person name="Ninomiya N."/>
            <person name="Nishio T."/>
            <person name="Okada M."/>
            <person name="Plessy C."/>
            <person name="Shibata K."/>
            <person name="Shiraki T."/>
            <person name="Suzuki S."/>
            <person name="Tagami M."/>
            <person name="Waki K."/>
            <person name="Watahiki A."/>
            <person name="Okamura-Oho Y."/>
            <person name="Suzuki H."/>
            <person name="Kawai J."/>
            <person name="Hayashizaki Y."/>
        </authorList>
    </citation>
    <scope>NUCLEOTIDE SEQUENCE [LARGE SCALE MRNA]</scope>
    <source>
        <strain>C57BL/6J</strain>
        <tissue>Head</tissue>
    </source>
</reference>
<reference key="2">
    <citation type="journal article" date="2009" name="PLoS Biol.">
        <title>Lineage-specific biology revealed by a finished genome assembly of the mouse.</title>
        <authorList>
            <person name="Church D.M."/>
            <person name="Goodstadt L."/>
            <person name="Hillier L.W."/>
            <person name="Zody M.C."/>
            <person name="Goldstein S."/>
            <person name="She X."/>
            <person name="Bult C.J."/>
            <person name="Agarwala R."/>
            <person name="Cherry J.L."/>
            <person name="DiCuccio M."/>
            <person name="Hlavina W."/>
            <person name="Kapustin Y."/>
            <person name="Meric P."/>
            <person name="Maglott D."/>
            <person name="Birtle Z."/>
            <person name="Marques A.C."/>
            <person name="Graves T."/>
            <person name="Zhou S."/>
            <person name="Teague B."/>
            <person name="Potamousis K."/>
            <person name="Churas C."/>
            <person name="Place M."/>
            <person name="Herschleb J."/>
            <person name="Runnheim R."/>
            <person name="Forrest D."/>
            <person name="Amos-Landgraf J."/>
            <person name="Schwartz D.C."/>
            <person name="Cheng Z."/>
            <person name="Lindblad-Toh K."/>
            <person name="Eichler E.E."/>
            <person name="Ponting C.P."/>
        </authorList>
    </citation>
    <scope>NUCLEOTIDE SEQUENCE [LARGE SCALE GENOMIC DNA]</scope>
    <source>
        <strain>C57BL/6J</strain>
    </source>
</reference>
<reference key="3">
    <citation type="journal article" date="2004" name="Genome Res.">
        <title>The status, quality, and expansion of the NIH full-length cDNA project: the Mammalian Gene Collection (MGC).</title>
        <authorList>
            <consortium name="The MGC Project Team"/>
        </authorList>
    </citation>
    <scope>NUCLEOTIDE SEQUENCE [LARGE SCALE MRNA]</scope>
    <source>
        <tissue>Brain</tissue>
    </source>
</reference>
<reference key="4">
    <citation type="journal article" date="2010" name="Cell">
        <title>A tissue-specific atlas of mouse protein phosphorylation and expression.</title>
        <authorList>
            <person name="Huttlin E.L."/>
            <person name="Jedrychowski M.P."/>
            <person name="Elias J.E."/>
            <person name="Goswami T."/>
            <person name="Rad R."/>
            <person name="Beausoleil S.A."/>
            <person name="Villen J."/>
            <person name="Haas W."/>
            <person name="Sowa M.E."/>
            <person name="Gygi S.P."/>
        </authorList>
    </citation>
    <scope>IDENTIFICATION BY MASS SPECTROMETRY [LARGE SCALE ANALYSIS]</scope>
    <source>
        <tissue>Brain</tissue>
    </source>
</reference>
<dbReference type="EMBL" id="AK082024">
    <property type="protein sequence ID" value="BAC38394.1"/>
    <property type="molecule type" value="mRNA"/>
</dbReference>
<dbReference type="EMBL" id="AL844603">
    <property type="status" value="NOT_ANNOTATED_CDS"/>
    <property type="molecule type" value="Genomic_DNA"/>
</dbReference>
<dbReference type="EMBL" id="BC116926">
    <property type="protein sequence ID" value="AAI16927.1"/>
    <property type="molecule type" value="mRNA"/>
</dbReference>
<dbReference type="EMBL" id="BC116932">
    <property type="protein sequence ID" value="AAI16933.1"/>
    <property type="molecule type" value="mRNA"/>
</dbReference>
<dbReference type="CCDS" id="CCDS16491.1"/>
<dbReference type="RefSeq" id="NP_796164.1">
    <property type="nucleotide sequence ID" value="NM_177190.5"/>
</dbReference>
<dbReference type="RefSeq" id="XP_006499797.1">
    <property type="nucleotide sequence ID" value="XM_006499734.5"/>
</dbReference>
<dbReference type="FunCoup" id="Q8BTG3">
    <property type="interactions" value="748"/>
</dbReference>
<dbReference type="STRING" id="10090.ENSMUSP00000106747"/>
<dbReference type="iPTMnet" id="Q8BTG3"/>
<dbReference type="PhosphoSitePlus" id="Q8BTG3"/>
<dbReference type="PaxDb" id="10090-ENSMUSP00000028597"/>
<dbReference type="PeptideAtlas" id="Q8BTG3"/>
<dbReference type="ProteomicsDB" id="254513"/>
<dbReference type="Pumba" id="Q8BTG3"/>
<dbReference type="Antibodypedia" id="1092">
    <property type="antibodies" value="20 antibodies from 10 providers"/>
</dbReference>
<dbReference type="DNASU" id="320554"/>
<dbReference type="Ensembl" id="ENSMUST00000028597.4">
    <property type="protein sequence ID" value="ENSMUSP00000028597.4"/>
    <property type="gene ID" value="ENSMUSG00000027175.11"/>
</dbReference>
<dbReference type="Ensembl" id="ENSMUST00000111118.8">
    <property type="protein sequence ID" value="ENSMUSP00000106747.2"/>
    <property type="gene ID" value="ENSMUSG00000027175.11"/>
</dbReference>
<dbReference type="GeneID" id="320554"/>
<dbReference type="KEGG" id="mmu:320554"/>
<dbReference type="UCSC" id="uc008lkb.1">
    <property type="organism name" value="mouse"/>
</dbReference>
<dbReference type="AGR" id="MGI:2444263"/>
<dbReference type="CTD" id="55346"/>
<dbReference type="MGI" id="MGI:2444263">
    <property type="gene designation" value="Tcp11l1"/>
</dbReference>
<dbReference type="VEuPathDB" id="HostDB:ENSMUSG00000027175"/>
<dbReference type="eggNOG" id="KOG1981">
    <property type="taxonomic scope" value="Eukaryota"/>
</dbReference>
<dbReference type="GeneTree" id="ENSGT00940000157402"/>
<dbReference type="HOGENOM" id="CLU_026469_0_1_1"/>
<dbReference type="InParanoid" id="Q8BTG3"/>
<dbReference type="OMA" id="CRDEDIN"/>
<dbReference type="OrthoDB" id="276323at2759"/>
<dbReference type="PhylomeDB" id="Q8BTG3"/>
<dbReference type="TreeFam" id="TF313385"/>
<dbReference type="BioGRID-ORCS" id="320554">
    <property type="hits" value="4 hits in 76 CRISPR screens"/>
</dbReference>
<dbReference type="PRO" id="PR:Q8BTG3"/>
<dbReference type="Proteomes" id="UP000000589">
    <property type="component" value="Chromosome 2"/>
</dbReference>
<dbReference type="RNAct" id="Q8BTG3">
    <property type="molecule type" value="protein"/>
</dbReference>
<dbReference type="Bgee" id="ENSMUSG00000027175">
    <property type="expression patterns" value="Expressed in heart left ventricle and 70 other cell types or tissues"/>
</dbReference>
<dbReference type="GO" id="GO:0005874">
    <property type="term" value="C:microtubule"/>
    <property type="evidence" value="ECO:0007669"/>
    <property type="project" value="Ensembl"/>
</dbReference>
<dbReference type="InterPro" id="IPR008862">
    <property type="entry name" value="Tcp11"/>
</dbReference>
<dbReference type="PANTHER" id="PTHR12832:SF15">
    <property type="entry name" value="T-COMPLEX PROTEIN 11-LIKE PROTEIN 1"/>
    <property type="match status" value="1"/>
</dbReference>
<dbReference type="PANTHER" id="PTHR12832">
    <property type="entry name" value="TESTIS-SPECIFIC PROTEIN PBS13 T-COMPLEX 11"/>
    <property type="match status" value="1"/>
</dbReference>
<dbReference type="Pfam" id="PF05794">
    <property type="entry name" value="Tcp11"/>
    <property type="match status" value="1"/>
</dbReference>
<sequence length="509" mass="56332">MSENLDKSHVDEAGEAEAAASEQGLEGALECSDETLQKKVKSDSPSSQRVGRPHSSPARLVTVEELLETAKGVTNMALAHEIVVTGDFRINAVELAEGSLEKRVKEIVHKAFWDCLSVQLSEEPPTYDHAIKLVGEIKETLLSFLLPGHTRLRNQITEVLDLELIKQEAENGALDISKLAEFIIGMMGILCAPARDEEVKKLKGIKEIVPLFRAIFSVLDLMKVDMANFAISSIRPHLMQQSVEYERRKFQEVLERQPNSLDFATQWLEEATNDLLSQKYKHALPAGGGAAGSGDAPLLTPVSVQNFAYLKLLKWDHFQRPFPETVLMDQSRFQELQLQLEQLAVLGAVLLVTFSTAAPGISGHADFAEKLKMMVKTLLTDMHLPSFHLEDALASIGEKVCLEVSSCLSLCGSSPFSVAKETVLKGQIQALASPEDPIRRIMESRIFTFLETYLASGHQKPLPTVPGGLGPIQKELEEVAVKFVRLVNYNKMVFCPYYDAILSKLLLRS</sequence>
<feature type="chain" id="PRO_0000313748" description="T-complex protein 11-like protein 1">
    <location>
        <begin position="1"/>
        <end position="509"/>
    </location>
</feature>
<feature type="region of interest" description="Disordered" evidence="2">
    <location>
        <begin position="1"/>
        <end position="57"/>
    </location>
</feature>
<feature type="compositionally biased region" description="Basic and acidic residues" evidence="2">
    <location>
        <begin position="1"/>
        <end position="12"/>
    </location>
</feature>
<feature type="compositionally biased region" description="Low complexity" evidence="2">
    <location>
        <begin position="16"/>
        <end position="30"/>
    </location>
</feature>
<feature type="modified residue" description="Phosphoserine" evidence="1">
    <location>
        <position position="56"/>
    </location>
</feature>